<sequence>MLQTLHDYFWWERLWLPVNLTWADLEDRDGRVYAKASDLYITLPLALLFLIIRYFFELYVATPLAALLNVKEKTRLRAPPNPTLEHFYMTSGKQPKQADVELLSRQSGLSGRQVERWFRRRRNQDRPSLLKKFREASWRFTFYLIAFIAGTAVIVDKPWFYDLRKVWEGYPIQSIIPSQYWYYMIELSFYWSLLFSIASDVKRKDFKEQIIHHVATIILISFSWFANYVRAGTLIMALHDSSDYLLESAKMFNYAGWKNTCNNIFIVFAIVFIITRLVILPFWILHCTLVYPLELYPAFFGYYFFNFMMGVLQLLHIFWAYLILRMAHKFITGKVVEDERSDREETESSEGEEAAAGGGAKNRPLANGHPILNNNHRKND</sequence>
<accession>Q3ZBF8</accession>
<name>CERS2_BOVIN</name>
<proteinExistence type="evidence at transcript level"/>
<feature type="chain" id="PRO_0000240446" description="Ceramide synthase 2">
    <location>
        <begin position="1"/>
        <end position="380"/>
    </location>
</feature>
<feature type="topological domain" description="Lumenal" evidence="2">
    <location>
        <begin position="1"/>
        <end position="40"/>
    </location>
</feature>
<feature type="transmembrane region" description="Helical" evidence="3">
    <location>
        <begin position="41"/>
        <end position="61"/>
    </location>
</feature>
<feature type="transmembrane region" description="Helical" evidence="3">
    <location>
        <begin position="140"/>
        <end position="160"/>
    </location>
</feature>
<feature type="transmembrane region" description="Helical" evidence="3">
    <location>
        <begin position="181"/>
        <end position="201"/>
    </location>
</feature>
<feature type="transmembrane region" description="Helical" evidence="3">
    <location>
        <begin position="209"/>
        <end position="229"/>
    </location>
</feature>
<feature type="transmembrane region" description="Helical" evidence="3">
    <location>
        <begin position="264"/>
        <end position="284"/>
    </location>
</feature>
<feature type="transmembrane region" description="Helical" evidence="3">
    <location>
        <begin position="304"/>
        <end position="324"/>
    </location>
</feature>
<feature type="topological domain" description="Cytoplasmic" evidence="2">
    <location>
        <begin position="325"/>
        <end position="380"/>
    </location>
</feature>
<feature type="domain" description="TLC" evidence="4">
    <location>
        <begin position="131"/>
        <end position="332"/>
    </location>
</feature>
<feature type="region of interest" description="Homeobox-like" evidence="6">
    <location>
        <begin position="67"/>
        <end position="128"/>
    </location>
</feature>
<feature type="region of interest" description="Disordered" evidence="5">
    <location>
        <begin position="338"/>
        <end position="380"/>
    </location>
</feature>
<feature type="short sequence motif" description="Last loop motif" evidence="2">
    <location>
        <begin position="291"/>
        <end position="300"/>
    </location>
</feature>
<feature type="compositionally biased region" description="Acidic residues" evidence="5">
    <location>
        <begin position="344"/>
        <end position="353"/>
    </location>
</feature>
<feature type="modified residue" description="Phosphoserine" evidence="2">
    <location>
        <position position="341"/>
    </location>
</feature>
<feature type="modified residue" description="Phosphothreonine" evidence="2">
    <location>
        <position position="346"/>
    </location>
</feature>
<feature type="modified residue" description="Phosphoserine" evidence="2">
    <location>
        <position position="348"/>
    </location>
</feature>
<feature type="modified residue" description="Phosphoserine" evidence="2">
    <location>
        <position position="349"/>
    </location>
</feature>
<feature type="glycosylation site" description="N-linked (GlcNAc...) asparagine" evidence="3">
    <location>
        <position position="19"/>
    </location>
</feature>
<organism>
    <name type="scientific">Bos taurus</name>
    <name type="common">Bovine</name>
    <dbReference type="NCBI Taxonomy" id="9913"/>
    <lineage>
        <taxon>Eukaryota</taxon>
        <taxon>Metazoa</taxon>
        <taxon>Chordata</taxon>
        <taxon>Craniata</taxon>
        <taxon>Vertebrata</taxon>
        <taxon>Euteleostomi</taxon>
        <taxon>Mammalia</taxon>
        <taxon>Eutheria</taxon>
        <taxon>Laurasiatheria</taxon>
        <taxon>Artiodactyla</taxon>
        <taxon>Ruminantia</taxon>
        <taxon>Pecora</taxon>
        <taxon>Bovidae</taxon>
        <taxon>Bovinae</taxon>
        <taxon>Bos</taxon>
    </lineage>
</organism>
<comment type="function">
    <text evidence="1 2">Ceramide synthase that catalyzes the transfer of the acyl chain from acyl-CoA to a sphingoid base, with high selectivity toward very-long-chain fatty acyl-CoA (chain length C22-C27) (By similarity). N-acylates sphinganine and sphingosine bases to form dihydroceramides and ceramides in de novo synthesis and salvage pathways, respectively (By similarity). Plays a non-redundant role in the synthesis of ceramides with very-long-chain fatty acids in kidney, liver and brain. Regulates the abundance of myelin-specific sphingolipids galactosylceramide and sulfatide that affects myelin sheath architecture and motor neuron functions (By similarity).</text>
</comment>
<comment type="catalytic activity">
    <reaction evidence="1 2">
        <text>a very long-chain fatty acyl-CoA + a sphingoid base = an N-(very-long-chain fatty acyl)-sphingoid base + CoA + H(+)</text>
        <dbReference type="Rhea" id="RHEA:61480"/>
        <dbReference type="ChEBI" id="CHEBI:15378"/>
        <dbReference type="ChEBI" id="CHEBI:57287"/>
        <dbReference type="ChEBI" id="CHEBI:84410"/>
        <dbReference type="ChEBI" id="CHEBI:138261"/>
        <dbReference type="ChEBI" id="CHEBI:144712"/>
        <dbReference type="EC" id="2.3.1.297"/>
    </reaction>
</comment>
<comment type="catalytic activity">
    <reaction evidence="2">
        <text>docosanoyl-CoA + sphinganine = N-docosanoylsphinganine + CoA + H(+)</text>
        <dbReference type="Rhea" id="RHEA:36535"/>
        <dbReference type="ChEBI" id="CHEBI:15378"/>
        <dbReference type="ChEBI" id="CHEBI:57287"/>
        <dbReference type="ChEBI" id="CHEBI:57817"/>
        <dbReference type="ChEBI" id="CHEBI:65059"/>
        <dbReference type="ChEBI" id="CHEBI:67021"/>
    </reaction>
    <physiologicalReaction direction="left-to-right" evidence="2">
        <dbReference type="Rhea" id="RHEA:36536"/>
    </physiologicalReaction>
</comment>
<comment type="catalytic activity">
    <reaction evidence="2">
        <text>tetracosanoyl-CoA + sphinganine = N-tetracosanoylsphinganine + CoA + H(+)</text>
        <dbReference type="Rhea" id="RHEA:33591"/>
        <dbReference type="ChEBI" id="CHEBI:15378"/>
        <dbReference type="ChEBI" id="CHEBI:52961"/>
        <dbReference type="ChEBI" id="CHEBI:57287"/>
        <dbReference type="ChEBI" id="CHEBI:57817"/>
        <dbReference type="ChEBI" id="CHEBI:65052"/>
    </reaction>
    <physiologicalReaction direction="left-to-right" evidence="2">
        <dbReference type="Rhea" id="RHEA:33592"/>
    </physiologicalReaction>
</comment>
<comment type="catalytic activity">
    <reaction evidence="2">
        <text>hexacosanoyl-CoA + sphinganine = N-hexacosanoylsphinganine + CoA + H(+)</text>
        <dbReference type="Rhea" id="RHEA:33351"/>
        <dbReference type="ChEBI" id="CHEBI:15378"/>
        <dbReference type="ChEBI" id="CHEBI:52962"/>
        <dbReference type="ChEBI" id="CHEBI:57287"/>
        <dbReference type="ChEBI" id="CHEBI:57817"/>
        <dbReference type="ChEBI" id="CHEBI:64868"/>
    </reaction>
    <physiologicalReaction direction="left-to-right" evidence="2">
        <dbReference type="Rhea" id="RHEA:33352"/>
    </physiologicalReaction>
</comment>
<comment type="catalytic activity">
    <reaction evidence="2">
        <text>(15Z)-tetracosenoyl-CoA + sphinganine = N-(15Z-tetracosenoyl)-sphinganine + CoA + H(+)</text>
        <dbReference type="Rhea" id="RHEA:36667"/>
        <dbReference type="ChEBI" id="CHEBI:15378"/>
        <dbReference type="ChEBI" id="CHEBI:57287"/>
        <dbReference type="ChEBI" id="CHEBI:57817"/>
        <dbReference type="ChEBI" id="CHEBI:74128"/>
        <dbReference type="ChEBI" id="CHEBI:74130"/>
    </reaction>
    <physiologicalReaction direction="left-to-right" evidence="2">
        <dbReference type="Rhea" id="RHEA:36668"/>
    </physiologicalReaction>
</comment>
<comment type="catalytic activity">
    <reaction evidence="2">
        <text>2-hydroxytetracosanoyl-CoA + sphinganine = N-(2-hydroxytetracosanoyl)-sphinganine + CoA + H(+)</text>
        <dbReference type="Rhea" id="RHEA:36627"/>
        <dbReference type="ChEBI" id="CHEBI:15378"/>
        <dbReference type="ChEBI" id="CHEBI:52371"/>
        <dbReference type="ChEBI" id="CHEBI:57287"/>
        <dbReference type="ChEBI" id="CHEBI:57817"/>
        <dbReference type="ChEBI" id="CHEBI:74118"/>
    </reaction>
    <physiologicalReaction direction="left-to-right" evidence="2">
        <dbReference type="Rhea" id="RHEA:36628"/>
    </physiologicalReaction>
</comment>
<comment type="catalytic activity">
    <reaction evidence="2">
        <text>2-hydroxydocosanoyl-CoA + sphinganine = N-(2-hydroxydocosanoyl)-sphinganine + CoA + H(+)</text>
        <dbReference type="Rhea" id="RHEA:36619"/>
        <dbReference type="ChEBI" id="CHEBI:15378"/>
        <dbReference type="ChEBI" id="CHEBI:57287"/>
        <dbReference type="ChEBI" id="CHEBI:57817"/>
        <dbReference type="ChEBI" id="CHEBI:67023"/>
        <dbReference type="ChEBI" id="CHEBI:74117"/>
    </reaction>
    <physiologicalReaction direction="left-to-right" evidence="2">
        <dbReference type="Rhea" id="RHEA:36620"/>
    </physiologicalReaction>
</comment>
<comment type="catalytic activity">
    <reaction evidence="2">
        <text>2-hydroxytetracosenoyl-CoA + sphinganine = N-(2-hydroxytetracosenoyl)-sphinganine + CoA + H(+)</text>
        <dbReference type="Rhea" id="RHEA:36767"/>
        <dbReference type="ChEBI" id="CHEBI:15378"/>
        <dbReference type="ChEBI" id="CHEBI:57287"/>
        <dbReference type="ChEBI" id="CHEBI:57817"/>
        <dbReference type="ChEBI" id="CHEBI:74215"/>
        <dbReference type="ChEBI" id="CHEBI:74216"/>
    </reaction>
    <physiologicalReaction direction="left-to-right" evidence="2">
        <dbReference type="Rhea" id="RHEA:36768"/>
    </physiologicalReaction>
</comment>
<comment type="catalytic activity">
    <reaction evidence="2">
        <text>tetracosenoyl-CoA + sphinganine = an N-tetracosenoylsphinganine + CoA + H(+)</text>
        <dbReference type="Rhea" id="RHEA:36715"/>
        <dbReference type="ChEBI" id="CHEBI:15378"/>
        <dbReference type="ChEBI" id="CHEBI:57287"/>
        <dbReference type="ChEBI" id="CHEBI:57817"/>
        <dbReference type="ChEBI" id="CHEBI:74146"/>
        <dbReference type="ChEBI" id="CHEBI:74160"/>
    </reaction>
    <physiologicalReaction direction="left-to-right" evidence="2">
        <dbReference type="Rhea" id="RHEA:36716"/>
    </physiologicalReaction>
</comment>
<comment type="catalytic activity">
    <reaction evidence="2">
        <text>hexacosenoyl-CoA + sphinganine = N-hexacosenoylsphinganine + CoA + H(+)</text>
        <dbReference type="Rhea" id="RHEA:36719"/>
        <dbReference type="ChEBI" id="CHEBI:15378"/>
        <dbReference type="ChEBI" id="CHEBI:57287"/>
        <dbReference type="ChEBI" id="CHEBI:57817"/>
        <dbReference type="ChEBI" id="CHEBI:74161"/>
        <dbReference type="ChEBI" id="CHEBI:74162"/>
    </reaction>
    <physiologicalReaction direction="left-to-right" evidence="2">
        <dbReference type="Rhea" id="RHEA:36720"/>
    </physiologicalReaction>
</comment>
<comment type="catalytic activity">
    <reaction evidence="2">
        <text>tetracosanoyl-CoA + sphing-4-enine = N-tetracosanoyl-sphing-4-enine + CoA + H(+)</text>
        <dbReference type="Rhea" id="RHEA:37115"/>
        <dbReference type="ChEBI" id="CHEBI:15378"/>
        <dbReference type="ChEBI" id="CHEBI:57287"/>
        <dbReference type="ChEBI" id="CHEBI:57756"/>
        <dbReference type="ChEBI" id="CHEBI:65052"/>
        <dbReference type="ChEBI" id="CHEBI:72965"/>
    </reaction>
    <physiologicalReaction direction="left-to-right" evidence="2">
        <dbReference type="Rhea" id="RHEA:37116"/>
    </physiologicalReaction>
</comment>
<comment type="catalytic activity">
    <reaction evidence="2">
        <text>tetracosenoyl-CoA + sphing-4-enine = N-(tetracosenoyl)-sphing-4-enine + CoA + H(+)</text>
        <dbReference type="Rhea" id="RHEA:37123"/>
        <dbReference type="ChEBI" id="CHEBI:15378"/>
        <dbReference type="ChEBI" id="CHEBI:57287"/>
        <dbReference type="ChEBI" id="CHEBI:57756"/>
        <dbReference type="ChEBI" id="CHEBI:74146"/>
        <dbReference type="ChEBI" id="CHEBI:74457"/>
    </reaction>
    <physiologicalReaction direction="left-to-right" evidence="2">
        <dbReference type="Rhea" id="RHEA:37124"/>
    </physiologicalReaction>
</comment>
<comment type="catalytic activity">
    <reaction evidence="2">
        <text>heptadecasphing-4-enine + tetracosanoyl-CoA = N-tetracosanoyl-heptadecasphing-4-enine + CoA + H(+)</text>
        <dbReference type="Rhea" id="RHEA:36739"/>
        <dbReference type="ChEBI" id="CHEBI:15378"/>
        <dbReference type="ChEBI" id="CHEBI:57287"/>
        <dbReference type="ChEBI" id="CHEBI:65052"/>
        <dbReference type="ChEBI" id="CHEBI:74166"/>
        <dbReference type="ChEBI" id="CHEBI:74167"/>
    </reaction>
    <physiologicalReaction direction="left-to-right" evidence="2">
        <dbReference type="Rhea" id="RHEA:36740"/>
    </physiologicalReaction>
</comment>
<comment type="catalytic activity">
    <reaction evidence="2">
        <text>a fatty acyl-CoA + sphing-4-enine = an N-acylsphing-4-enine + CoA + H(+)</text>
        <dbReference type="Rhea" id="RHEA:23768"/>
        <dbReference type="ChEBI" id="CHEBI:15378"/>
        <dbReference type="ChEBI" id="CHEBI:52639"/>
        <dbReference type="ChEBI" id="CHEBI:57287"/>
        <dbReference type="ChEBI" id="CHEBI:57756"/>
        <dbReference type="ChEBI" id="CHEBI:77636"/>
        <dbReference type="EC" id="2.3.1.24"/>
    </reaction>
    <physiologicalReaction direction="left-to-right" evidence="2">
        <dbReference type="Rhea" id="RHEA:23769"/>
    </physiologicalReaction>
</comment>
<comment type="catalytic activity">
    <reaction evidence="1">
        <text>sphing-4-enine + hexadecanoyl-CoA = N-hexadecanoylsphing-4-enine + CoA + H(+)</text>
        <dbReference type="Rhea" id="RHEA:36687"/>
        <dbReference type="ChEBI" id="CHEBI:15378"/>
        <dbReference type="ChEBI" id="CHEBI:57287"/>
        <dbReference type="ChEBI" id="CHEBI:57379"/>
        <dbReference type="ChEBI" id="CHEBI:57756"/>
        <dbReference type="ChEBI" id="CHEBI:72959"/>
    </reaction>
    <physiologicalReaction direction="left-to-right" evidence="1">
        <dbReference type="Rhea" id="RHEA:36688"/>
    </physiologicalReaction>
</comment>
<comment type="catalytic activity">
    <reaction evidence="1">
        <text>sphing-4-enine + octadecanoyl-CoA = N-octadecanoylsphing-4-enine + CoA + H(+)</text>
        <dbReference type="Rhea" id="RHEA:36691"/>
        <dbReference type="ChEBI" id="CHEBI:15378"/>
        <dbReference type="ChEBI" id="CHEBI:57287"/>
        <dbReference type="ChEBI" id="CHEBI:57394"/>
        <dbReference type="ChEBI" id="CHEBI:57756"/>
        <dbReference type="ChEBI" id="CHEBI:72961"/>
    </reaction>
    <physiologicalReaction direction="left-to-right" evidence="1">
        <dbReference type="Rhea" id="RHEA:36692"/>
    </physiologicalReaction>
</comment>
<comment type="catalytic activity">
    <reaction evidence="1">
        <text>eicosanoyl-CoA + sphing-4-enine = N-eicosanoyl-sphing-4-enine + CoA + H(+)</text>
        <dbReference type="Rhea" id="RHEA:45284"/>
        <dbReference type="ChEBI" id="CHEBI:15378"/>
        <dbReference type="ChEBI" id="CHEBI:57287"/>
        <dbReference type="ChEBI" id="CHEBI:57380"/>
        <dbReference type="ChEBI" id="CHEBI:57756"/>
        <dbReference type="ChEBI" id="CHEBI:72962"/>
    </reaction>
    <physiologicalReaction direction="left-to-right" evidence="1">
        <dbReference type="Rhea" id="RHEA:45285"/>
    </physiologicalReaction>
</comment>
<comment type="catalytic activity">
    <reaction evidence="2">
        <text>sphinganine + hexadecanoyl-CoA = N-hexadecanoylsphinganine + CoA + H(+)</text>
        <dbReference type="Rhea" id="RHEA:36539"/>
        <dbReference type="ChEBI" id="CHEBI:15378"/>
        <dbReference type="ChEBI" id="CHEBI:57287"/>
        <dbReference type="ChEBI" id="CHEBI:57379"/>
        <dbReference type="ChEBI" id="CHEBI:57817"/>
        <dbReference type="ChEBI" id="CHEBI:67042"/>
    </reaction>
    <physiologicalReaction direction="left-to-right" evidence="2">
        <dbReference type="Rhea" id="RHEA:36540"/>
    </physiologicalReaction>
</comment>
<comment type="catalytic activity">
    <reaction evidence="1">
        <text>sphinganine + octadecanoyl-CoA = N-(octadecanoyl)-sphinganine + CoA + H(+)</text>
        <dbReference type="Rhea" id="RHEA:36547"/>
        <dbReference type="ChEBI" id="CHEBI:15378"/>
        <dbReference type="ChEBI" id="CHEBI:57287"/>
        <dbReference type="ChEBI" id="CHEBI:57394"/>
        <dbReference type="ChEBI" id="CHEBI:57817"/>
        <dbReference type="ChEBI" id="CHEBI:67033"/>
    </reaction>
    <physiologicalReaction direction="left-to-right" evidence="1">
        <dbReference type="Rhea" id="RHEA:36548"/>
    </physiologicalReaction>
</comment>
<comment type="catalytic activity">
    <reaction evidence="2">
        <text>sphinganine + (9Z)-octadecenoyl-CoA = N-(9Z-octadecenoyl)-sphinganine + CoA + H(+)</text>
        <dbReference type="Rhea" id="RHEA:36575"/>
        <dbReference type="ChEBI" id="CHEBI:15378"/>
        <dbReference type="ChEBI" id="CHEBI:57287"/>
        <dbReference type="ChEBI" id="CHEBI:57387"/>
        <dbReference type="ChEBI" id="CHEBI:57817"/>
        <dbReference type="ChEBI" id="CHEBI:74100"/>
    </reaction>
    <physiologicalReaction direction="left-to-right" evidence="2">
        <dbReference type="Rhea" id="RHEA:36576"/>
    </physiologicalReaction>
</comment>
<comment type="catalytic activity">
    <reaction evidence="2">
        <text>eicosanoyl-CoA + sphinganine = N-eicosanoylsphinganine + CoA + H(+)</text>
        <dbReference type="Rhea" id="RHEA:36555"/>
        <dbReference type="ChEBI" id="CHEBI:15378"/>
        <dbReference type="ChEBI" id="CHEBI:57287"/>
        <dbReference type="ChEBI" id="CHEBI:57380"/>
        <dbReference type="ChEBI" id="CHEBI:57817"/>
        <dbReference type="ChEBI" id="CHEBI:67027"/>
    </reaction>
    <physiologicalReaction direction="left-to-right" evidence="2">
        <dbReference type="Rhea" id="RHEA:36556"/>
    </physiologicalReaction>
</comment>
<comment type="activity regulation">
    <text evidence="2">Ceramide synthase activity is inhibited by sphingosine-1-phosphate.</text>
</comment>
<comment type="pathway">
    <text evidence="2">Lipid metabolism; sphingolipid metabolism.</text>
</comment>
<comment type="subunit">
    <text evidence="1 2">Interacts with ATP6V0C, ASGR1, ASGR2 and SLC22A1/OCT1. Interacts with ELOV1, HSD17B12 and TECR (By similarity). Interacts with NDUFS2 (By similarity).</text>
</comment>
<comment type="subcellular location">
    <subcellularLocation>
        <location evidence="2">Endoplasmic reticulum membrane</location>
        <topology evidence="3">Multi-pass membrane protein</topology>
    </subcellularLocation>
</comment>
<comment type="domain">
    <text evidence="2">The last loop motif confers selectivity toward behenoyl-CoA (docosanoyl-CoA; C22:0-CoA) and lignoceroyl-CoA (tetracosanoyl-CoA; C24:0-CoA) as acyl donors.</text>
</comment>
<comment type="domain">
    <text evidence="6">The predicted Homeobox domain (Homeobox-like region) lacks important residues for DNA-binding. Moreover, the protein localizes to the endoplasmic reticulum membrane, strongly suggesting that it does not constitute a canonical homeobox domain.</text>
</comment>
<comment type="PTM">
    <text evidence="1">Acetylated. Deacetylation by SIRT3 increases enzyme activity and promotes mitochondrial ceramide accumulation.</text>
</comment>
<comment type="PTM">
    <text evidence="2">Phosphorylated at the C-terminus by CK2, leading to increase the ceramide synthase activity.</text>
</comment>
<dbReference type="EC" id="2.3.1.24" evidence="2"/>
<dbReference type="EC" id="2.3.1.297" evidence="1 2"/>
<dbReference type="EMBL" id="BC103330">
    <property type="protein sequence ID" value="AAI03331.1"/>
    <property type="molecule type" value="mRNA"/>
</dbReference>
<dbReference type="RefSeq" id="NP_001029839.1">
    <property type="nucleotide sequence ID" value="NM_001034667.1"/>
</dbReference>
<dbReference type="RefSeq" id="XP_005203977.1">
    <property type="nucleotide sequence ID" value="XM_005203920.5"/>
</dbReference>
<dbReference type="RefSeq" id="XP_005203978.1">
    <property type="nucleotide sequence ID" value="XM_005203921.3"/>
</dbReference>
<dbReference type="RefSeq" id="XP_024845379.1">
    <property type="nucleotide sequence ID" value="XM_024989611.2"/>
</dbReference>
<dbReference type="RefSeq" id="XP_024845380.1">
    <property type="nucleotide sequence ID" value="XM_024989612.2"/>
</dbReference>
<dbReference type="SMR" id="Q3ZBF8"/>
<dbReference type="FunCoup" id="Q3ZBF8">
    <property type="interactions" value="1550"/>
</dbReference>
<dbReference type="STRING" id="9913.ENSBTAP00000058510"/>
<dbReference type="GlyCosmos" id="Q3ZBF8">
    <property type="glycosylation" value="1 site, No reported glycans"/>
</dbReference>
<dbReference type="GlyGen" id="Q3ZBF8">
    <property type="glycosylation" value="1 site"/>
</dbReference>
<dbReference type="PaxDb" id="9913-ENSBTAP00000000109"/>
<dbReference type="GeneID" id="539223"/>
<dbReference type="KEGG" id="bta:539223"/>
<dbReference type="CTD" id="29956"/>
<dbReference type="VEuPathDB" id="HostDB:ENSBTAG00000000099"/>
<dbReference type="eggNOG" id="KOG1607">
    <property type="taxonomic scope" value="Eukaryota"/>
</dbReference>
<dbReference type="HOGENOM" id="CLU_028277_1_1_1"/>
<dbReference type="InParanoid" id="Q3ZBF8"/>
<dbReference type="OMA" id="IFAKRCI"/>
<dbReference type="OrthoDB" id="537032at2759"/>
<dbReference type="TreeFam" id="TF314319"/>
<dbReference type="Reactome" id="R-BTA-1660661">
    <property type="pathway name" value="Sphingolipid de novo biosynthesis"/>
</dbReference>
<dbReference type="UniPathway" id="UPA00222"/>
<dbReference type="Proteomes" id="UP000009136">
    <property type="component" value="Chromosome 3"/>
</dbReference>
<dbReference type="Bgee" id="ENSBTAG00000000099">
    <property type="expression patterns" value="Expressed in midbrain and 103 other cell types or tissues"/>
</dbReference>
<dbReference type="GO" id="GO:0005783">
    <property type="term" value="C:endoplasmic reticulum"/>
    <property type="evidence" value="ECO:0000250"/>
    <property type="project" value="UniProtKB"/>
</dbReference>
<dbReference type="GO" id="GO:0005789">
    <property type="term" value="C:endoplasmic reticulum membrane"/>
    <property type="evidence" value="ECO:0007669"/>
    <property type="project" value="UniProtKB-SubCell"/>
</dbReference>
<dbReference type="GO" id="GO:0003677">
    <property type="term" value="F:DNA binding"/>
    <property type="evidence" value="ECO:0007669"/>
    <property type="project" value="InterPro"/>
</dbReference>
<dbReference type="GO" id="GO:0050291">
    <property type="term" value="F:sphingosine N-acyltransferase activity"/>
    <property type="evidence" value="ECO:0000250"/>
    <property type="project" value="UniProtKB"/>
</dbReference>
<dbReference type="GO" id="GO:0046513">
    <property type="term" value="P:ceramide biosynthetic process"/>
    <property type="evidence" value="ECO:0000318"/>
    <property type="project" value="GO_Central"/>
</dbReference>
<dbReference type="GO" id="GO:0019216">
    <property type="term" value="P:regulation of lipid metabolic process"/>
    <property type="evidence" value="ECO:0000250"/>
    <property type="project" value="UniProtKB"/>
</dbReference>
<dbReference type="CDD" id="cd00086">
    <property type="entry name" value="homeodomain"/>
    <property type="match status" value="1"/>
</dbReference>
<dbReference type="FunFam" id="1.10.10.60:FF:000020">
    <property type="entry name" value="Ceramide synthase 5"/>
    <property type="match status" value="1"/>
</dbReference>
<dbReference type="Gene3D" id="1.10.10.60">
    <property type="entry name" value="Homeodomain-like"/>
    <property type="match status" value="1"/>
</dbReference>
<dbReference type="InterPro" id="IPR001356">
    <property type="entry name" value="HD"/>
</dbReference>
<dbReference type="InterPro" id="IPR009057">
    <property type="entry name" value="Homeodomain-like_sf"/>
</dbReference>
<dbReference type="InterPro" id="IPR016439">
    <property type="entry name" value="Lag1/Lac1-like"/>
</dbReference>
<dbReference type="InterPro" id="IPR006634">
    <property type="entry name" value="TLC-dom"/>
</dbReference>
<dbReference type="PANTHER" id="PTHR12560:SF7">
    <property type="entry name" value="CERAMIDE SYNTHASE 2"/>
    <property type="match status" value="1"/>
</dbReference>
<dbReference type="PANTHER" id="PTHR12560">
    <property type="entry name" value="LONGEVITY ASSURANCE FACTOR 1 LAG1"/>
    <property type="match status" value="1"/>
</dbReference>
<dbReference type="Pfam" id="PF00046">
    <property type="entry name" value="Homeodomain"/>
    <property type="match status" value="1"/>
</dbReference>
<dbReference type="Pfam" id="PF03798">
    <property type="entry name" value="TRAM_LAG1_CLN8"/>
    <property type="match status" value="1"/>
</dbReference>
<dbReference type="PIRSF" id="PIRSF005225">
    <property type="entry name" value="LAG1_LAC1"/>
    <property type="match status" value="1"/>
</dbReference>
<dbReference type="SMART" id="SM00724">
    <property type="entry name" value="TLC"/>
    <property type="match status" value="1"/>
</dbReference>
<dbReference type="SUPFAM" id="SSF46689">
    <property type="entry name" value="Homeodomain-like"/>
    <property type="match status" value="1"/>
</dbReference>
<dbReference type="PROSITE" id="PS50922">
    <property type="entry name" value="TLC"/>
    <property type="match status" value="1"/>
</dbReference>
<protein>
    <recommendedName>
        <fullName evidence="2">Ceramide synthase 2</fullName>
        <shortName evidence="2">CerS2</shortName>
    </recommendedName>
    <alternativeName>
        <fullName evidence="2">LAG1 longevity assurance homolog 2</fullName>
    </alternativeName>
    <alternativeName>
        <fullName evidence="6">Sphingosine N-acyltransferase CERS2</fullName>
        <ecNumber evidence="2">2.3.1.24</ecNumber>
    </alternativeName>
    <alternativeName>
        <fullName evidence="2">Tumor metastasis-suppressor gene 1 protein</fullName>
    </alternativeName>
    <alternativeName>
        <fullName evidence="6">Very-long-chain ceramide synthase CERS2</fullName>
        <ecNumber evidence="1 2">2.3.1.297</ecNumber>
    </alternativeName>
</protein>
<evidence type="ECO:0000250" key="1">
    <source>
        <dbReference type="UniProtKB" id="Q924Z4"/>
    </source>
</evidence>
<evidence type="ECO:0000250" key="2">
    <source>
        <dbReference type="UniProtKB" id="Q96G23"/>
    </source>
</evidence>
<evidence type="ECO:0000255" key="3"/>
<evidence type="ECO:0000255" key="4">
    <source>
        <dbReference type="PROSITE-ProRule" id="PRU00205"/>
    </source>
</evidence>
<evidence type="ECO:0000256" key="5">
    <source>
        <dbReference type="SAM" id="MobiDB-lite"/>
    </source>
</evidence>
<evidence type="ECO:0000305" key="6"/>
<reference key="1">
    <citation type="submission" date="2005-08" db="EMBL/GenBank/DDBJ databases">
        <authorList>
            <consortium name="NIH - Mammalian Gene Collection (MGC) project"/>
        </authorList>
    </citation>
    <scope>NUCLEOTIDE SEQUENCE [LARGE SCALE MRNA]</scope>
    <source>
        <strain>Crossbred X Angus</strain>
        <tissue>Ileum</tissue>
    </source>
</reference>
<gene>
    <name evidence="2" type="primary">CERS2</name>
    <name evidence="2" type="synonym">LASS2</name>
</gene>
<keyword id="KW-0007">Acetylation</keyword>
<keyword id="KW-0256">Endoplasmic reticulum</keyword>
<keyword id="KW-0325">Glycoprotein</keyword>
<keyword id="KW-0444">Lipid biosynthesis</keyword>
<keyword id="KW-0443">Lipid metabolism</keyword>
<keyword id="KW-0472">Membrane</keyword>
<keyword id="KW-0597">Phosphoprotein</keyword>
<keyword id="KW-1185">Reference proteome</keyword>
<keyword id="KW-0808">Transferase</keyword>
<keyword id="KW-0812">Transmembrane</keyword>
<keyword id="KW-1133">Transmembrane helix</keyword>